<protein>
    <recommendedName>
        <fullName evidence="1">Light-independent protochlorophyllide reductase subunit N</fullName>
        <shortName evidence="1">DPOR subunit N</shortName>
        <shortName evidence="1">LI-POR subunit N</shortName>
        <ecNumber evidence="1">1.3.7.7</ecNumber>
    </recommendedName>
</protein>
<keyword id="KW-0004">4Fe-4S</keyword>
<keyword id="KW-0067">ATP-binding</keyword>
<keyword id="KW-0149">Chlorophyll biosynthesis</keyword>
<keyword id="KW-0150">Chloroplast</keyword>
<keyword id="KW-0408">Iron</keyword>
<keyword id="KW-0411">Iron-sulfur</keyword>
<keyword id="KW-0479">Metal-binding</keyword>
<keyword id="KW-0547">Nucleotide-binding</keyword>
<keyword id="KW-0560">Oxidoreductase</keyword>
<keyword id="KW-0602">Photosynthesis</keyword>
<keyword id="KW-0934">Plastid</keyword>
<feature type="chain" id="PRO_0000275274" description="Light-independent protochlorophyllide reductase subunit N">
    <location>
        <begin position="1"/>
        <end position="464"/>
    </location>
</feature>
<feature type="binding site" evidence="1">
    <location>
        <position position="29"/>
    </location>
    <ligand>
        <name>[4Fe-4S] cluster</name>
        <dbReference type="ChEBI" id="CHEBI:49883"/>
        <note>ligand shared with heterodimeric partner</note>
    </ligand>
</feature>
<feature type="binding site" evidence="1">
    <location>
        <position position="54"/>
    </location>
    <ligand>
        <name>[4Fe-4S] cluster</name>
        <dbReference type="ChEBI" id="CHEBI:49883"/>
        <note>ligand shared with heterodimeric partner</note>
    </ligand>
</feature>
<feature type="binding site" evidence="1">
    <location>
        <position position="114"/>
    </location>
    <ligand>
        <name>[4Fe-4S] cluster</name>
        <dbReference type="ChEBI" id="CHEBI:49883"/>
        <note>ligand shared with heterodimeric partner</note>
    </ligand>
</feature>
<evidence type="ECO:0000255" key="1">
    <source>
        <dbReference type="HAMAP-Rule" id="MF_00352"/>
    </source>
</evidence>
<organism>
    <name type="scientific">Stigeoclonium helveticum</name>
    <name type="common">Green alga</name>
    <dbReference type="NCBI Taxonomy" id="55999"/>
    <lineage>
        <taxon>Eukaryota</taxon>
        <taxon>Viridiplantae</taxon>
        <taxon>Chlorophyta</taxon>
        <taxon>core chlorophytes</taxon>
        <taxon>Chlorophyceae</taxon>
        <taxon>OCC clade</taxon>
        <taxon>Chaetophorales</taxon>
        <taxon>Chaetophoraceae</taxon>
        <taxon>Stigeoclonium</taxon>
    </lineage>
</organism>
<name>CHLN_STIHE</name>
<dbReference type="EC" id="1.3.7.7" evidence="1"/>
<dbReference type="EMBL" id="DQ630521">
    <property type="protein sequence ID" value="ABF60156.1"/>
    <property type="molecule type" value="Genomic_DNA"/>
</dbReference>
<dbReference type="RefSeq" id="YP_764423.1">
    <property type="nucleotide sequence ID" value="NC_008372.1"/>
</dbReference>
<dbReference type="SMR" id="Q06SE3"/>
<dbReference type="GeneID" id="4308399"/>
<dbReference type="UniPathway" id="UPA00670"/>
<dbReference type="GO" id="GO:0009507">
    <property type="term" value="C:chloroplast"/>
    <property type="evidence" value="ECO:0007669"/>
    <property type="project" value="UniProtKB-SubCell"/>
</dbReference>
<dbReference type="GO" id="GO:0051539">
    <property type="term" value="F:4 iron, 4 sulfur cluster binding"/>
    <property type="evidence" value="ECO:0007669"/>
    <property type="project" value="UniProtKB-UniRule"/>
</dbReference>
<dbReference type="GO" id="GO:0005524">
    <property type="term" value="F:ATP binding"/>
    <property type="evidence" value="ECO:0007669"/>
    <property type="project" value="UniProtKB-UniRule"/>
</dbReference>
<dbReference type="GO" id="GO:0046872">
    <property type="term" value="F:metal ion binding"/>
    <property type="evidence" value="ECO:0007669"/>
    <property type="project" value="UniProtKB-KW"/>
</dbReference>
<dbReference type="GO" id="GO:0016730">
    <property type="term" value="F:oxidoreductase activity, acting on iron-sulfur proteins as donors"/>
    <property type="evidence" value="ECO:0007669"/>
    <property type="project" value="InterPro"/>
</dbReference>
<dbReference type="GO" id="GO:0016636">
    <property type="term" value="F:oxidoreductase activity, acting on the CH-CH group of donors, iron-sulfur protein as acceptor"/>
    <property type="evidence" value="ECO:0007669"/>
    <property type="project" value="UniProtKB-UniRule"/>
</dbReference>
<dbReference type="GO" id="GO:0036068">
    <property type="term" value="P:light-independent chlorophyll biosynthetic process"/>
    <property type="evidence" value="ECO:0007669"/>
    <property type="project" value="UniProtKB-UniRule"/>
</dbReference>
<dbReference type="GO" id="GO:0019685">
    <property type="term" value="P:photosynthesis, dark reaction"/>
    <property type="evidence" value="ECO:0007669"/>
    <property type="project" value="InterPro"/>
</dbReference>
<dbReference type="CDD" id="cd01979">
    <property type="entry name" value="Pchlide_reductase_N"/>
    <property type="match status" value="1"/>
</dbReference>
<dbReference type="Gene3D" id="3.40.50.1980">
    <property type="entry name" value="Nitrogenase molybdenum iron protein domain"/>
    <property type="match status" value="3"/>
</dbReference>
<dbReference type="HAMAP" id="MF_00352">
    <property type="entry name" value="ChlN_BchN"/>
    <property type="match status" value="1"/>
</dbReference>
<dbReference type="InterPro" id="IPR050293">
    <property type="entry name" value="LIPOR_BchN/ChlN"/>
</dbReference>
<dbReference type="InterPro" id="IPR000510">
    <property type="entry name" value="Nase/OxRdtase_comp1"/>
</dbReference>
<dbReference type="InterPro" id="IPR005970">
    <property type="entry name" value="Protochl_reductN"/>
</dbReference>
<dbReference type="NCBIfam" id="TIGR01279">
    <property type="entry name" value="DPOR_bchN"/>
    <property type="match status" value="1"/>
</dbReference>
<dbReference type="NCBIfam" id="NF002768">
    <property type="entry name" value="PRK02842.1"/>
    <property type="match status" value="1"/>
</dbReference>
<dbReference type="PANTHER" id="PTHR39429">
    <property type="entry name" value="LIGHT-INDEPENDENT PROTOCHLOROPHYLLIDE REDUCTASE SUBUNIT N"/>
    <property type="match status" value="1"/>
</dbReference>
<dbReference type="PANTHER" id="PTHR39429:SF3">
    <property type="entry name" value="LIGHT-INDEPENDENT PROTOCHLOROPHYLLIDE REDUCTASE SUBUNIT N"/>
    <property type="match status" value="1"/>
</dbReference>
<dbReference type="Pfam" id="PF00148">
    <property type="entry name" value="Oxidored_nitro"/>
    <property type="match status" value="1"/>
</dbReference>
<dbReference type="PIRSF" id="PIRSF000162">
    <property type="entry name" value="P_chlorophyll_rd"/>
    <property type="match status" value="1"/>
</dbReference>
<dbReference type="SUPFAM" id="SSF53807">
    <property type="entry name" value="Helical backbone' metal receptor"/>
    <property type="match status" value="1"/>
</dbReference>
<accession>Q06SE3</accession>
<gene>
    <name evidence="1" type="primary">chlN</name>
</gene>
<sequence>MSQLITSPKINEKETLKFECETGNYHTFCPISCVSWLYQKIEDSFFLVIGTKTCGYFLQNALGVMIFAEPRYAMAELEEADISAQLNDYKELKRLCLQIKRDRNPSVIVWIGTCTTEIIKMDLEGMAPRLETEIGIPIVVARANGLDYAFTQGEDTVLAAMACRCPDKISTTSDSKNLETPMMIDNTQKNGQNSKALAHPPLVLFGSLPSAVVNVLTLELNKQGITVDGWLPSSRYTDLPALGEDVYVCGVNPFLSRTAMTLMRRKKCKLINAPFPIGPDGTRAWIEKICNVLGVIPTGLEEREKKIWQSLENYLPLVRGKSVFFMGDNLLEISLARFLTRCGMIVYECGVPYLDKRYQASELLLLEQTCLEKNVPMPRIVEKPDNYYQIQRIRELQPDLVITGMALSNPLEARGINTKWSVEFTFAQIHGFANSKDVLELVTRPLRRNMMQQVSNKTLVKPAK</sequence>
<reference key="1">
    <citation type="journal article" date="2006" name="Mol. Genet. Genomics">
        <title>Distinctive architecture of the chloroplast genome in the chlorophycean green alga Stigeoclonium helveticum.</title>
        <authorList>
            <person name="Belanger A.-S."/>
            <person name="Brouard J.-S."/>
            <person name="Charlebois P."/>
            <person name="Otis C."/>
            <person name="Lemieux C."/>
            <person name="Turmel M."/>
        </authorList>
    </citation>
    <scope>NUCLEOTIDE SEQUENCE [LARGE SCALE GENOMIC DNA]</scope>
    <source>
        <strain>UTEX 441</strain>
    </source>
</reference>
<comment type="function">
    <text evidence="1">Component of the dark-operative protochlorophyllide reductase (DPOR) that uses Mg-ATP and reduced ferredoxin to reduce ring D of protochlorophyllide (Pchlide) to form chlorophyllide a (Chlide). This reaction is light-independent. The NB-protein (ChlN-ChlB) is the catalytic component of the complex.</text>
</comment>
<comment type="catalytic activity">
    <reaction evidence="1">
        <text>chlorophyllide a + oxidized 2[4Fe-4S]-[ferredoxin] + 2 ADP + 2 phosphate = protochlorophyllide a + reduced 2[4Fe-4S]-[ferredoxin] + 2 ATP + 2 H2O</text>
        <dbReference type="Rhea" id="RHEA:28202"/>
        <dbReference type="Rhea" id="RHEA-COMP:10002"/>
        <dbReference type="Rhea" id="RHEA-COMP:10004"/>
        <dbReference type="ChEBI" id="CHEBI:15377"/>
        <dbReference type="ChEBI" id="CHEBI:30616"/>
        <dbReference type="ChEBI" id="CHEBI:33722"/>
        <dbReference type="ChEBI" id="CHEBI:33723"/>
        <dbReference type="ChEBI" id="CHEBI:43474"/>
        <dbReference type="ChEBI" id="CHEBI:83348"/>
        <dbReference type="ChEBI" id="CHEBI:83350"/>
        <dbReference type="ChEBI" id="CHEBI:456216"/>
        <dbReference type="EC" id="1.3.7.7"/>
    </reaction>
</comment>
<comment type="cofactor">
    <cofactor evidence="1">
        <name>[4Fe-4S] cluster</name>
        <dbReference type="ChEBI" id="CHEBI:49883"/>
    </cofactor>
    <text evidence="1">Binds 1 [4Fe-4S] cluster per heterodimer. The cluster is bound at the heterodimer interface by residues from both subunits.</text>
</comment>
<comment type="pathway">
    <text evidence="1">Porphyrin-containing compound metabolism; chlorophyll biosynthesis (light-independent).</text>
</comment>
<comment type="subunit">
    <text evidence="1">Protochlorophyllide reductase is composed of three subunits; ChlL, ChlN and ChlB. Forms a heterotetramer of two ChlB and two ChlN subunits.</text>
</comment>
<comment type="subcellular location">
    <subcellularLocation>
        <location>Plastid</location>
        <location>Chloroplast</location>
    </subcellularLocation>
</comment>
<comment type="similarity">
    <text evidence="1">Belongs to the BchN/ChlN family.</text>
</comment>
<proteinExistence type="inferred from homology"/>
<geneLocation type="chloroplast"/>